<reference key="1">
    <citation type="submission" date="2006-04" db="EMBL/GenBank/DDBJ databases">
        <title>Complete sequence of chromosome of Deinococcus geothermalis DSM 11300.</title>
        <authorList>
            <person name="Copeland A."/>
            <person name="Lucas S."/>
            <person name="Lapidus A."/>
            <person name="Barry K."/>
            <person name="Detter J.C."/>
            <person name="Glavina del Rio T."/>
            <person name="Hammon N."/>
            <person name="Israni S."/>
            <person name="Dalin E."/>
            <person name="Tice H."/>
            <person name="Pitluck S."/>
            <person name="Brettin T."/>
            <person name="Bruce D."/>
            <person name="Han C."/>
            <person name="Tapia R."/>
            <person name="Saunders E."/>
            <person name="Gilna P."/>
            <person name="Schmutz J."/>
            <person name="Larimer F."/>
            <person name="Land M."/>
            <person name="Hauser L."/>
            <person name="Kyrpides N."/>
            <person name="Kim E."/>
            <person name="Daly M.J."/>
            <person name="Fredrickson J.K."/>
            <person name="Makarova K.S."/>
            <person name="Gaidamakova E.K."/>
            <person name="Zhai M."/>
            <person name="Richardson P."/>
        </authorList>
    </citation>
    <scope>NUCLEOTIDE SEQUENCE [LARGE SCALE GENOMIC DNA]</scope>
    <source>
        <strain>DSM 11300 / CIP 105573 / AG-3a</strain>
    </source>
</reference>
<comment type="function">
    <text evidence="1">Catalyzes the attachment of glutamate to tRNA(Glu) in a two-step reaction: glutamate is first activated by ATP to form Glu-AMP and then transferred to the acceptor end of tRNA(Glu).</text>
</comment>
<comment type="catalytic activity">
    <reaction evidence="1">
        <text>tRNA(Glu) + L-glutamate + ATP = L-glutamyl-tRNA(Glu) + AMP + diphosphate</text>
        <dbReference type="Rhea" id="RHEA:23540"/>
        <dbReference type="Rhea" id="RHEA-COMP:9663"/>
        <dbReference type="Rhea" id="RHEA-COMP:9680"/>
        <dbReference type="ChEBI" id="CHEBI:29985"/>
        <dbReference type="ChEBI" id="CHEBI:30616"/>
        <dbReference type="ChEBI" id="CHEBI:33019"/>
        <dbReference type="ChEBI" id="CHEBI:78442"/>
        <dbReference type="ChEBI" id="CHEBI:78520"/>
        <dbReference type="ChEBI" id="CHEBI:456215"/>
        <dbReference type="EC" id="6.1.1.17"/>
    </reaction>
</comment>
<comment type="subunit">
    <text evidence="1">Monomer.</text>
</comment>
<comment type="subcellular location">
    <subcellularLocation>
        <location evidence="1">Cytoplasm</location>
    </subcellularLocation>
</comment>
<comment type="similarity">
    <text evidence="1">Belongs to the class-I aminoacyl-tRNA synthetase family. Glutamate--tRNA ligase type 1 subfamily.</text>
</comment>
<organism>
    <name type="scientific">Deinococcus geothermalis (strain DSM 11300 / CIP 105573 / AG-3a)</name>
    <dbReference type="NCBI Taxonomy" id="319795"/>
    <lineage>
        <taxon>Bacteria</taxon>
        <taxon>Thermotogati</taxon>
        <taxon>Deinococcota</taxon>
        <taxon>Deinococci</taxon>
        <taxon>Deinococcales</taxon>
        <taxon>Deinococcaceae</taxon>
        <taxon>Deinococcus</taxon>
    </lineage>
</organism>
<proteinExistence type="inferred from homology"/>
<protein>
    <recommendedName>
        <fullName evidence="1">Glutamate--tRNA ligase</fullName>
        <ecNumber evidence="1">6.1.1.17</ecNumber>
    </recommendedName>
    <alternativeName>
        <fullName evidence="1">Glutamyl-tRNA synthetase</fullName>
        <shortName evidence="1">GluRS</shortName>
    </alternativeName>
</protein>
<name>SYE_DEIGD</name>
<accession>Q1IY50</accession>
<evidence type="ECO:0000255" key="1">
    <source>
        <dbReference type="HAMAP-Rule" id="MF_00022"/>
    </source>
</evidence>
<dbReference type="EC" id="6.1.1.17" evidence="1"/>
<dbReference type="EMBL" id="CP000359">
    <property type="protein sequence ID" value="ABF45834.1"/>
    <property type="molecule type" value="Genomic_DNA"/>
</dbReference>
<dbReference type="RefSeq" id="WP_011530668.1">
    <property type="nucleotide sequence ID" value="NC_008025.1"/>
</dbReference>
<dbReference type="SMR" id="Q1IY50"/>
<dbReference type="STRING" id="319795.Dgeo_1539"/>
<dbReference type="KEGG" id="dge:Dgeo_1539"/>
<dbReference type="eggNOG" id="COG0008">
    <property type="taxonomic scope" value="Bacteria"/>
</dbReference>
<dbReference type="HOGENOM" id="CLU_015768_6_3_0"/>
<dbReference type="Proteomes" id="UP000002431">
    <property type="component" value="Chromosome"/>
</dbReference>
<dbReference type="GO" id="GO:0005829">
    <property type="term" value="C:cytosol"/>
    <property type="evidence" value="ECO:0007669"/>
    <property type="project" value="TreeGrafter"/>
</dbReference>
<dbReference type="GO" id="GO:0005524">
    <property type="term" value="F:ATP binding"/>
    <property type="evidence" value="ECO:0007669"/>
    <property type="project" value="UniProtKB-UniRule"/>
</dbReference>
<dbReference type="GO" id="GO:0004818">
    <property type="term" value="F:glutamate-tRNA ligase activity"/>
    <property type="evidence" value="ECO:0007669"/>
    <property type="project" value="UniProtKB-UniRule"/>
</dbReference>
<dbReference type="GO" id="GO:0000049">
    <property type="term" value="F:tRNA binding"/>
    <property type="evidence" value="ECO:0007669"/>
    <property type="project" value="InterPro"/>
</dbReference>
<dbReference type="GO" id="GO:0008270">
    <property type="term" value="F:zinc ion binding"/>
    <property type="evidence" value="ECO:0007669"/>
    <property type="project" value="InterPro"/>
</dbReference>
<dbReference type="GO" id="GO:0006424">
    <property type="term" value="P:glutamyl-tRNA aminoacylation"/>
    <property type="evidence" value="ECO:0007669"/>
    <property type="project" value="UniProtKB-UniRule"/>
</dbReference>
<dbReference type="CDD" id="cd00808">
    <property type="entry name" value="GluRS_core"/>
    <property type="match status" value="1"/>
</dbReference>
<dbReference type="FunFam" id="3.40.50.620:FF:000045">
    <property type="entry name" value="Glutamate--tRNA ligase, mitochondrial"/>
    <property type="match status" value="1"/>
</dbReference>
<dbReference type="Gene3D" id="1.10.10.350">
    <property type="match status" value="1"/>
</dbReference>
<dbReference type="Gene3D" id="1.10.8.70">
    <property type="entry name" value="Glutamate-tRNA synthetase, class I, anticodon-binding domain 1"/>
    <property type="match status" value="1"/>
</dbReference>
<dbReference type="Gene3D" id="3.40.50.620">
    <property type="entry name" value="HUPs"/>
    <property type="match status" value="1"/>
</dbReference>
<dbReference type="HAMAP" id="MF_00022">
    <property type="entry name" value="Glu_tRNA_synth_type1"/>
    <property type="match status" value="1"/>
</dbReference>
<dbReference type="InterPro" id="IPR045462">
    <property type="entry name" value="aa-tRNA-synth_I_cd-bd"/>
</dbReference>
<dbReference type="InterPro" id="IPR020751">
    <property type="entry name" value="aa-tRNA-synth_I_codon-bd_sub2"/>
</dbReference>
<dbReference type="InterPro" id="IPR001412">
    <property type="entry name" value="aa-tRNA-synth_I_CS"/>
</dbReference>
<dbReference type="InterPro" id="IPR008925">
    <property type="entry name" value="aa_tRNA-synth_I_cd-bd_sf"/>
</dbReference>
<dbReference type="InterPro" id="IPR004527">
    <property type="entry name" value="Glu-tRNA-ligase_bac/mito"/>
</dbReference>
<dbReference type="InterPro" id="IPR020752">
    <property type="entry name" value="Glu-tRNA-synth_I_codon-bd_sub1"/>
</dbReference>
<dbReference type="InterPro" id="IPR000924">
    <property type="entry name" value="Glu/Gln-tRNA-synth"/>
</dbReference>
<dbReference type="InterPro" id="IPR020058">
    <property type="entry name" value="Glu/Gln-tRNA-synth_Ib_cat-dom"/>
</dbReference>
<dbReference type="InterPro" id="IPR049940">
    <property type="entry name" value="GluQ/Sye"/>
</dbReference>
<dbReference type="InterPro" id="IPR033910">
    <property type="entry name" value="GluRS_core"/>
</dbReference>
<dbReference type="InterPro" id="IPR014729">
    <property type="entry name" value="Rossmann-like_a/b/a_fold"/>
</dbReference>
<dbReference type="NCBIfam" id="TIGR00464">
    <property type="entry name" value="gltX_bact"/>
    <property type="match status" value="1"/>
</dbReference>
<dbReference type="PANTHER" id="PTHR43311">
    <property type="entry name" value="GLUTAMATE--TRNA LIGASE"/>
    <property type="match status" value="1"/>
</dbReference>
<dbReference type="PANTHER" id="PTHR43311:SF2">
    <property type="entry name" value="GLUTAMATE--TRNA LIGASE, MITOCHONDRIAL-RELATED"/>
    <property type="match status" value="1"/>
</dbReference>
<dbReference type="Pfam" id="PF19269">
    <property type="entry name" value="Anticodon_2"/>
    <property type="match status" value="1"/>
</dbReference>
<dbReference type="Pfam" id="PF00749">
    <property type="entry name" value="tRNA-synt_1c"/>
    <property type="match status" value="1"/>
</dbReference>
<dbReference type="PRINTS" id="PR00987">
    <property type="entry name" value="TRNASYNTHGLU"/>
</dbReference>
<dbReference type="SUPFAM" id="SSF48163">
    <property type="entry name" value="An anticodon-binding domain of class I aminoacyl-tRNA synthetases"/>
    <property type="match status" value="1"/>
</dbReference>
<dbReference type="SUPFAM" id="SSF52374">
    <property type="entry name" value="Nucleotidylyl transferase"/>
    <property type="match status" value="1"/>
</dbReference>
<dbReference type="PROSITE" id="PS00178">
    <property type="entry name" value="AA_TRNA_LIGASE_I"/>
    <property type="match status" value="1"/>
</dbReference>
<keyword id="KW-0030">Aminoacyl-tRNA synthetase</keyword>
<keyword id="KW-0067">ATP-binding</keyword>
<keyword id="KW-0963">Cytoplasm</keyword>
<keyword id="KW-0436">Ligase</keyword>
<keyword id="KW-0547">Nucleotide-binding</keyword>
<keyword id="KW-0648">Protein biosynthesis</keyword>
<gene>
    <name evidence="1" type="primary">gltX</name>
    <name type="ordered locus">Dgeo_1539</name>
</gene>
<feature type="chain" id="PRO_0000330967" description="Glutamate--tRNA ligase">
    <location>
        <begin position="1"/>
        <end position="480"/>
    </location>
</feature>
<feature type="short sequence motif" description="'HIGH' region" evidence="1">
    <location>
        <begin position="9"/>
        <end position="19"/>
    </location>
</feature>
<feature type="short sequence motif" description="'KMSKS' region" evidence="1">
    <location>
        <begin position="253"/>
        <end position="257"/>
    </location>
</feature>
<feature type="binding site" evidence="1">
    <location>
        <position position="256"/>
    </location>
    <ligand>
        <name>ATP</name>
        <dbReference type="ChEBI" id="CHEBI:30616"/>
    </ligand>
</feature>
<sequence>MSVVTRIAPSPTGDPHVGTAYIGLFNHTLAQQARARGEEGKFILRIEDTDRNRYVPDSERRIFQMMAWLGLTPDESPLQGGPNGPYRQSERTAIYGEYARKLVEAGHAYYAFETPEELAALREAAQQEGRVIAVPSRDLDPAEAQRRVDAGESAVIRLKVPREGETVVNDALRKPIAFQNREIDDKVLLKADGYPTYHLANVVDDHLMGVTHVIRAEEWITSTPIHVLLYRAFGWAEPIFAHMPLLRNADKSKISKRKNPTSVEWYMAQGFLPEAMLNFLATMGWTHPEGKEIFDLAEFQRVFRLEDVTLGGPVFSLDKLRWMNGKYLREVLSEEEVAERLHAYLASQKHDLPDDDYFRAVVRMMIPRMDVFSEFLEKTPYFWSEDYPVSEKAQHLIEEGRPFLPELAARLKNLPSFDPATTEAALRAFAEERGLKPGKVMQPLRAAIAGTSESPGMFELLEVLGQERVVARVERAARGG</sequence>